<organism>
    <name type="scientific">Arabidopsis thaliana</name>
    <name type="common">Mouse-ear cress</name>
    <dbReference type="NCBI Taxonomy" id="3702"/>
    <lineage>
        <taxon>Eukaryota</taxon>
        <taxon>Viridiplantae</taxon>
        <taxon>Streptophyta</taxon>
        <taxon>Embryophyta</taxon>
        <taxon>Tracheophyta</taxon>
        <taxon>Spermatophyta</taxon>
        <taxon>Magnoliopsida</taxon>
        <taxon>eudicotyledons</taxon>
        <taxon>Gunneridae</taxon>
        <taxon>Pentapetalae</taxon>
        <taxon>rosids</taxon>
        <taxon>malvids</taxon>
        <taxon>Brassicales</taxon>
        <taxon>Brassicaceae</taxon>
        <taxon>Camelineae</taxon>
        <taxon>Arabidopsis</taxon>
    </lineage>
</organism>
<accession>Q3E8I8</accession>
<keyword id="KW-0929">Antimicrobial</keyword>
<keyword id="KW-1015">Disulfide bond</keyword>
<keyword id="KW-0295">Fungicide</keyword>
<keyword id="KW-0611">Plant defense</keyword>
<keyword id="KW-1185">Reference proteome</keyword>
<keyword id="KW-0964">Secreted</keyword>
<keyword id="KW-0732">Signal</keyword>
<comment type="subcellular location">
    <subcellularLocation>
        <location evidence="1">Secreted</location>
    </subcellularLocation>
</comment>
<comment type="similarity">
    <text evidence="3">Belongs to the DEFL family.</text>
</comment>
<protein>
    <recommendedName>
        <fullName>Defensin-like protein 116</fullName>
    </recommendedName>
</protein>
<gene>
    <name type="ordered locus">At5g42235</name>
    <name type="ORF">K5J14</name>
</gene>
<evidence type="ECO:0000250" key="1"/>
<evidence type="ECO:0000255" key="2"/>
<evidence type="ECO:0000305" key="3"/>
<sequence length="84" mass="9208">MAITKNMLVVLLLTIIFVTSSVHCSDSALGIGIKEDWEVCFSIDPCLTGEGTLGCTKWCRNHINLSLVGYCRTDPEHCCCVAEK</sequence>
<feature type="signal peptide" evidence="2">
    <location>
        <begin position="1"/>
        <end position="24"/>
    </location>
</feature>
<feature type="chain" id="PRO_0000379678" description="Defensin-like protein 116">
    <location>
        <begin position="25"/>
        <end position="84"/>
    </location>
</feature>
<feature type="disulfide bond" evidence="1">
    <location>
        <begin position="40"/>
        <end position="80"/>
    </location>
</feature>
<feature type="disulfide bond" evidence="1">
    <location>
        <begin position="46"/>
        <end position="71"/>
    </location>
</feature>
<feature type="disulfide bond" evidence="1">
    <location>
        <begin position="55"/>
        <end position="78"/>
    </location>
</feature>
<feature type="disulfide bond" evidence="1">
    <location>
        <begin position="59"/>
        <end position="79"/>
    </location>
</feature>
<proteinExistence type="inferred from homology"/>
<name>DF116_ARATH</name>
<dbReference type="EMBL" id="AB023032">
    <property type="status" value="NOT_ANNOTATED_CDS"/>
    <property type="molecule type" value="Genomic_DNA"/>
</dbReference>
<dbReference type="EMBL" id="CP002688">
    <property type="protein sequence ID" value="AED94785.1"/>
    <property type="molecule type" value="Genomic_DNA"/>
</dbReference>
<dbReference type="EMBL" id="BX832851">
    <property type="status" value="NOT_ANNOTATED_CDS"/>
    <property type="molecule type" value="mRNA"/>
</dbReference>
<dbReference type="RefSeq" id="NP_974869.1">
    <property type="nucleotide sequence ID" value="NM_203140.3"/>
</dbReference>
<dbReference type="SMR" id="Q3E8I8"/>
<dbReference type="PaxDb" id="3702-AT5G42235.1"/>
<dbReference type="ProteomicsDB" id="224638"/>
<dbReference type="EnsemblPlants" id="AT5G42235.1">
    <property type="protein sequence ID" value="AT5G42235.1"/>
    <property type="gene ID" value="AT5G42235"/>
</dbReference>
<dbReference type="GeneID" id="2746178"/>
<dbReference type="Gramene" id="AT5G42235.1">
    <property type="protein sequence ID" value="AT5G42235.1"/>
    <property type="gene ID" value="AT5G42235"/>
</dbReference>
<dbReference type="KEGG" id="ath:AT5G42235"/>
<dbReference type="Araport" id="AT5G42235"/>
<dbReference type="TAIR" id="AT5G42235"/>
<dbReference type="HOGENOM" id="CLU_183259_1_0_1"/>
<dbReference type="InParanoid" id="Q3E8I8"/>
<dbReference type="OMA" id="KEDWEVC"/>
<dbReference type="OrthoDB" id="10271294at2759"/>
<dbReference type="PhylomeDB" id="Q3E8I8"/>
<dbReference type="PRO" id="PR:Q3E8I8"/>
<dbReference type="Proteomes" id="UP000006548">
    <property type="component" value="Chromosome 5"/>
</dbReference>
<dbReference type="ExpressionAtlas" id="Q3E8I8">
    <property type="expression patterns" value="baseline and differential"/>
</dbReference>
<dbReference type="GO" id="GO:0005576">
    <property type="term" value="C:extracellular region"/>
    <property type="evidence" value="ECO:0007669"/>
    <property type="project" value="UniProtKB-SubCell"/>
</dbReference>
<dbReference type="GO" id="GO:0050832">
    <property type="term" value="P:defense response to fungus"/>
    <property type="evidence" value="ECO:0007669"/>
    <property type="project" value="UniProtKB-KW"/>
</dbReference>
<dbReference type="GO" id="GO:0031640">
    <property type="term" value="P:killing of cells of another organism"/>
    <property type="evidence" value="ECO:0007669"/>
    <property type="project" value="UniProtKB-KW"/>
</dbReference>
<reference key="1">
    <citation type="journal article" date="2000" name="DNA Res.">
        <title>Structural analysis of Arabidopsis thaliana chromosome 5. X. Sequence features of the regions of 3,076,755 bp covered by sixty P1 and TAC clones.</title>
        <authorList>
            <person name="Sato S."/>
            <person name="Nakamura Y."/>
            <person name="Kaneko T."/>
            <person name="Katoh T."/>
            <person name="Asamizu E."/>
            <person name="Kotani H."/>
            <person name="Tabata S."/>
        </authorList>
    </citation>
    <scope>NUCLEOTIDE SEQUENCE [LARGE SCALE GENOMIC DNA]</scope>
    <source>
        <strain>cv. Columbia</strain>
    </source>
</reference>
<reference key="2">
    <citation type="journal article" date="2017" name="Plant J.">
        <title>Araport11: a complete reannotation of the Arabidopsis thaliana reference genome.</title>
        <authorList>
            <person name="Cheng C.Y."/>
            <person name="Krishnakumar V."/>
            <person name="Chan A.P."/>
            <person name="Thibaud-Nissen F."/>
            <person name="Schobel S."/>
            <person name="Town C.D."/>
        </authorList>
    </citation>
    <scope>GENOME REANNOTATION</scope>
    <source>
        <strain>cv. Columbia</strain>
    </source>
</reference>
<reference key="3">
    <citation type="journal article" date="2004" name="Genome Res.">
        <title>Whole genome sequence comparisons and 'full-length' cDNA sequences: a combined approach to evaluate and improve Arabidopsis genome annotation.</title>
        <authorList>
            <person name="Castelli V."/>
            <person name="Aury J.-M."/>
            <person name="Jaillon O."/>
            <person name="Wincker P."/>
            <person name="Clepet C."/>
            <person name="Menard M."/>
            <person name="Cruaud C."/>
            <person name="Quetier F."/>
            <person name="Scarpelli C."/>
            <person name="Schaechter V."/>
            <person name="Temple G."/>
            <person name="Caboche M."/>
            <person name="Weissenbach J."/>
            <person name="Salanoubat M."/>
        </authorList>
    </citation>
    <scope>NUCLEOTIDE SEQUENCE [LARGE SCALE MRNA]</scope>
    <source>
        <strain>cv. Columbia</strain>
    </source>
</reference>
<reference key="4">
    <citation type="journal article" date="2005" name="Plant Physiol.">
        <title>Genome organization of more than 300 defensin-like genes in Arabidopsis.</title>
        <authorList>
            <person name="Silverstein K.A.T."/>
            <person name="Graham M.A."/>
            <person name="Paape T.D."/>
            <person name="VandenBosch K.A."/>
        </authorList>
    </citation>
    <scope>GENE FAMILY</scope>
</reference>